<dbReference type="EMBL" id="L01254">
    <property type="protein sequence ID" value="AAA71884.1"/>
    <property type="molecule type" value="Unassigned_DNA"/>
</dbReference>
<dbReference type="SMR" id="Q52347"/>
<dbReference type="GO" id="GO:0003677">
    <property type="term" value="F:DNA binding"/>
    <property type="evidence" value="ECO:0007669"/>
    <property type="project" value="UniProtKB-KW"/>
</dbReference>
<dbReference type="GO" id="GO:0003887">
    <property type="term" value="F:DNA-directed DNA polymerase activity"/>
    <property type="evidence" value="ECO:0007669"/>
    <property type="project" value="InterPro"/>
</dbReference>
<dbReference type="GO" id="GO:0006270">
    <property type="term" value="P:DNA replication initiation"/>
    <property type="evidence" value="ECO:0007669"/>
    <property type="project" value="InterPro"/>
</dbReference>
<dbReference type="GO" id="GO:0006276">
    <property type="term" value="P:plasmid maintenance"/>
    <property type="evidence" value="ECO:0007669"/>
    <property type="project" value="UniProtKB-KW"/>
</dbReference>
<dbReference type="Gene3D" id="1.10.10.10">
    <property type="entry name" value="Winged helix-like DNA-binding domain superfamily/Winged helix DNA-binding domain"/>
    <property type="match status" value="1"/>
</dbReference>
<dbReference type="InterPro" id="IPR000525">
    <property type="entry name" value="Initiator_Rep_WH1"/>
</dbReference>
<dbReference type="InterPro" id="IPR036388">
    <property type="entry name" value="WH-like_DNA-bd_sf"/>
</dbReference>
<dbReference type="Pfam" id="PF01051">
    <property type="entry name" value="Rep3_N"/>
    <property type="match status" value="1"/>
</dbReference>
<feature type="chain" id="PRO_0000068305" description="RepFIB replication protein A">
    <location>
        <begin position="1"/>
        <end position="325"/>
    </location>
</feature>
<feature type="region of interest" description="Disordered" evidence="2">
    <location>
        <begin position="279"/>
        <end position="298"/>
    </location>
</feature>
<organism>
    <name type="scientific">Escherichia coli</name>
    <dbReference type="NCBI Taxonomy" id="562"/>
    <lineage>
        <taxon>Bacteria</taxon>
        <taxon>Pseudomonadati</taxon>
        <taxon>Pseudomonadota</taxon>
        <taxon>Gammaproteobacteria</taxon>
        <taxon>Enterobacterales</taxon>
        <taxon>Enterobacteriaceae</taxon>
        <taxon>Escherichia</taxon>
    </lineage>
</organism>
<name>REP11_ECOLX</name>
<comment type="function">
    <text evidence="1">This protein is essential for plasmid replication; it is involved in copy control functions. In vitro, binds to the DNA repeat units, BCDD'D'', EFG and HIJ (By similarity).</text>
</comment>
<comment type="similarity">
    <text evidence="3">Belongs to the initiator RepB protein family.</text>
</comment>
<accession>Q52347</accession>
<proteinExistence type="inferred from homology"/>
<gene>
    <name type="primary">repA</name>
</gene>
<evidence type="ECO:0000250" key="1"/>
<evidence type="ECO:0000256" key="2">
    <source>
        <dbReference type="SAM" id="MobiDB-lite"/>
    </source>
</evidence>
<evidence type="ECO:0000305" key="3"/>
<geneLocation type="plasmid">
    <name>IncFI R386</name>
</geneLocation>
<sequence>MDKSSGELVTLTPNNNNTVQPVALMRLGVFVPTLKSLKNSKKNTLSRTDATEELTRLSLARAEGFDKVEITGPRLDMDNDFKTWVGIIHSFARHNVIGDKVELPFVEFAKLCGIPSSQSSRSLRERISPSLKRIAGTVISFSRTDEKHTREYITHLVQSAYYDTERDIVQLQADPRLFELYQFDRKVLLQLKAINALKRRESAQALYTFIESLPRDPAPISLARLRARLNLKSPVFSQNQTVRRAMEQLREIGYLDYTEIQRGRTKFFCIHYRRPRLKAPNDESKENPLPPSPAEKVSPEMAEKLALLEKLGITLDDLEKLFKSR</sequence>
<reference key="1">
    <citation type="journal article" date="1993" name="Plasmid">
        <title>RepFIB: a basic replicon of large plasmids.</title>
        <authorList>
            <person name="Gibbs M.D."/>
            <person name="Spiers A.J."/>
            <person name="Bergquist P.L."/>
        </authorList>
    </citation>
    <scope>NUCLEOTIDE SEQUENCE [GENOMIC DNA]</scope>
</reference>
<protein>
    <recommendedName>
        <fullName>RepFIB replication protein A</fullName>
    </recommendedName>
</protein>
<keyword id="KW-0235">DNA replication</keyword>
<keyword id="KW-0238">DNA-binding</keyword>
<keyword id="KW-0614">Plasmid</keyword>
<keyword id="KW-0615">Plasmid copy control</keyword>